<comment type="function">
    <text evidence="1">Confers DNA tethering and processivity to DNA polymerases and other proteins. Acts as a clamp, forming a ring around DNA (a reaction catalyzed by the clamp-loading complex) which diffuses in an ATP-independent manner freely and bidirectionally along dsDNA. Initially characterized for its ability to contact the catalytic subunit of DNA polymerase III (Pol III), a complex, multichain enzyme responsible for most of the replicative synthesis in bacteria; Pol III exhibits 3'-5' exonuclease proofreading activity. The beta chain is required for initiation of replication as well as for processivity of DNA replication.</text>
</comment>
<comment type="subunit">
    <text evidence="1">Forms a ring-shaped head-to-tail homodimer around DNA which binds and tethers DNA polymerases and other proteins to the DNA. The DNA replisome complex has a single clamp-loading complex (3 tau and 1 each of delta, delta', psi and chi subunits) which binds 3 Pol III cores (1 core on the leading strand and 2 on the lagging strand) each with a beta sliding clamp dimer. Additional proteins in the replisome are other copies of gamma, psi and chi, Ssb, DNA helicase and RNA primase.</text>
</comment>
<comment type="subcellular location">
    <subcellularLocation>
        <location evidence="1">Cytoplasm</location>
    </subcellularLocation>
</comment>
<comment type="similarity">
    <text evidence="2">Belongs to the beta sliding clamp family.</text>
</comment>
<gene>
    <name type="primary">dnaN</name>
    <name type="ordered locus">SAS0002</name>
</gene>
<dbReference type="EMBL" id="BX571857">
    <property type="protein sequence ID" value="CAG41774.1"/>
    <property type="molecule type" value="Genomic_DNA"/>
</dbReference>
<dbReference type="RefSeq" id="WP_000969811.1">
    <property type="nucleotide sequence ID" value="NC_002953.3"/>
</dbReference>
<dbReference type="SMR" id="Q6GD88"/>
<dbReference type="KEGG" id="sas:SAS0002"/>
<dbReference type="HOGENOM" id="CLU_038149_2_0_9"/>
<dbReference type="GO" id="GO:0005737">
    <property type="term" value="C:cytoplasm"/>
    <property type="evidence" value="ECO:0007669"/>
    <property type="project" value="UniProtKB-SubCell"/>
</dbReference>
<dbReference type="GO" id="GO:0009360">
    <property type="term" value="C:DNA polymerase III complex"/>
    <property type="evidence" value="ECO:0007669"/>
    <property type="project" value="InterPro"/>
</dbReference>
<dbReference type="GO" id="GO:0008408">
    <property type="term" value="F:3'-5' exonuclease activity"/>
    <property type="evidence" value="ECO:0007669"/>
    <property type="project" value="InterPro"/>
</dbReference>
<dbReference type="GO" id="GO:0003677">
    <property type="term" value="F:DNA binding"/>
    <property type="evidence" value="ECO:0007669"/>
    <property type="project" value="UniProtKB-KW"/>
</dbReference>
<dbReference type="GO" id="GO:0003887">
    <property type="term" value="F:DNA-directed DNA polymerase activity"/>
    <property type="evidence" value="ECO:0007669"/>
    <property type="project" value="UniProtKB-KW"/>
</dbReference>
<dbReference type="GO" id="GO:0006271">
    <property type="term" value="P:DNA strand elongation involved in DNA replication"/>
    <property type="evidence" value="ECO:0007669"/>
    <property type="project" value="TreeGrafter"/>
</dbReference>
<dbReference type="CDD" id="cd00140">
    <property type="entry name" value="beta_clamp"/>
    <property type="match status" value="1"/>
</dbReference>
<dbReference type="FunFam" id="3.10.150.10:FF:000007">
    <property type="entry name" value="Beta sliding clamp"/>
    <property type="match status" value="1"/>
</dbReference>
<dbReference type="Gene3D" id="3.70.10.10">
    <property type="match status" value="1"/>
</dbReference>
<dbReference type="Gene3D" id="3.10.150.10">
    <property type="entry name" value="DNA Polymerase III, subunit A, domain 2"/>
    <property type="match status" value="1"/>
</dbReference>
<dbReference type="InterPro" id="IPR046938">
    <property type="entry name" value="DNA_clamp_sf"/>
</dbReference>
<dbReference type="InterPro" id="IPR001001">
    <property type="entry name" value="DNA_polIII_beta"/>
</dbReference>
<dbReference type="InterPro" id="IPR022635">
    <property type="entry name" value="DNA_polIII_beta_C"/>
</dbReference>
<dbReference type="InterPro" id="IPR022637">
    <property type="entry name" value="DNA_polIII_beta_cen"/>
</dbReference>
<dbReference type="InterPro" id="IPR022634">
    <property type="entry name" value="DNA_polIII_beta_N"/>
</dbReference>
<dbReference type="NCBIfam" id="TIGR00663">
    <property type="entry name" value="dnan"/>
    <property type="match status" value="1"/>
</dbReference>
<dbReference type="PANTHER" id="PTHR30478:SF0">
    <property type="entry name" value="BETA SLIDING CLAMP"/>
    <property type="match status" value="1"/>
</dbReference>
<dbReference type="PANTHER" id="PTHR30478">
    <property type="entry name" value="DNA POLYMERASE III SUBUNIT BETA"/>
    <property type="match status" value="1"/>
</dbReference>
<dbReference type="Pfam" id="PF00712">
    <property type="entry name" value="DNA_pol3_beta"/>
    <property type="match status" value="1"/>
</dbReference>
<dbReference type="Pfam" id="PF02767">
    <property type="entry name" value="DNA_pol3_beta_2"/>
    <property type="match status" value="1"/>
</dbReference>
<dbReference type="Pfam" id="PF02768">
    <property type="entry name" value="DNA_pol3_beta_3"/>
    <property type="match status" value="1"/>
</dbReference>
<dbReference type="PIRSF" id="PIRSF000804">
    <property type="entry name" value="DNA_pol_III_b"/>
    <property type="match status" value="1"/>
</dbReference>
<dbReference type="SMART" id="SM00480">
    <property type="entry name" value="POL3Bc"/>
    <property type="match status" value="1"/>
</dbReference>
<dbReference type="SUPFAM" id="SSF55979">
    <property type="entry name" value="DNA clamp"/>
    <property type="match status" value="3"/>
</dbReference>
<protein>
    <recommendedName>
        <fullName>Beta sliding clamp</fullName>
        <shortName>Beta clamp</shortName>
        <shortName>Sliding clamp</shortName>
    </recommendedName>
    <alternativeName>
        <fullName>Beta-clamp processivity factor</fullName>
    </alternativeName>
    <alternativeName>
        <fullName>DNA polymerase III beta sliding clamp subunit</fullName>
    </alternativeName>
    <alternativeName>
        <fullName>DNA polymerase III subunit beta</fullName>
    </alternativeName>
</protein>
<organism>
    <name type="scientific">Staphylococcus aureus (strain MSSA476)</name>
    <dbReference type="NCBI Taxonomy" id="282459"/>
    <lineage>
        <taxon>Bacteria</taxon>
        <taxon>Bacillati</taxon>
        <taxon>Bacillota</taxon>
        <taxon>Bacilli</taxon>
        <taxon>Bacillales</taxon>
        <taxon>Staphylococcaceae</taxon>
        <taxon>Staphylococcus</taxon>
    </lineage>
</organism>
<name>DPO3B_STAAS</name>
<evidence type="ECO:0000250" key="1">
    <source>
        <dbReference type="UniProtKB" id="P0A988"/>
    </source>
</evidence>
<evidence type="ECO:0000305" key="2"/>
<sequence>MMEFTIKRDYFITQLNDTLKAISPRTTLPILTGIKIDAKEHEVILTGSDSEISIEITIPKTVDGEDIVNISETGSVVLPGRFFVDIIKKLPGKDVKLSTNEQFQTLITSGHSEFNLSGLDPDQYPLLPQVSRDDAIQLSVKVLKNVIAQTNFAVSTSETRPVLTGVNWLIQENELICTATDSHRLAVRKLQLEDVSENKNVIIPGKALAELNKIMSDNEEDIDIFFASNQVLFKVGNVNFISRLLEGHYPDTTRLFPENYEIKLSIDNGEFYHAIDRASLLAREGGNNVIKLSTGDDVVELSSTSPEIGTVKEEVDANDVEGGSLKISFNSKYMMDALKAIDNDEVEVEFFGTMKPFILKPKGDDSVTQLILPIRTY</sequence>
<proteinExistence type="inferred from homology"/>
<feature type="chain" id="PRO_0000105466" description="Beta sliding clamp">
    <location>
        <begin position="1"/>
        <end position="377"/>
    </location>
</feature>
<reference key="1">
    <citation type="journal article" date="2004" name="Proc. Natl. Acad. Sci. U.S.A.">
        <title>Complete genomes of two clinical Staphylococcus aureus strains: evidence for the rapid evolution of virulence and drug resistance.</title>
        <authorList>
            <person name="Holden M.T.G."/>
            <person name="Feil E.J."/>
            <person name="Lindsay J.A."/>
            <person name="Peacock S.J."/>
            <person name="Day N.P.J."/>
            <person name="Enright M.C."/>
            <person name="Foster T.J."/>
            <person name="Moore C.E."/>
            <person name="Hurst L."/>
            <person name="Atkin R."/>
            <person name="Barron A."/>
            <person name="Bason N."/>
            <person name="Bentley S.D."/>
            <person name="Chillingworth C."/>
            <person name="Chillingworth T."/>
            <person name="Churcher C."/>
            <person name="Clark L."/>
            <person name="Corton C."/>
            <person name="Cronin A."/>
            <person name="Doggett J."/>
            <person name="Dowd L."/>
            <person name="Feltwell T."/>
            <person name="Hance Z."/>
            <person name="Harris B."/>
            <person name="Hauser H."/>
            <person name="Holroyd S."/>
            <person name="Jagels K."/>
            <person name="James K.D."/>
            <person name="Lennard N."/>
            <person name="Line A."/>
            <person name="Mayes R."/>
            <person name="Moule S."/>
            <person name="Mungall K."/>
            <person name="Ormond D."/>
            <person name="Quail M.A."/>
            <person name="Rabbinowitsch E."/>
            <person name="Rutherford K.M."/>
            <person name="Sanders M."/>
            <person name="Sharp S."/>
            <person name="Simmonds M."/>
            <person name="Stevens K."/>
            <person name="Whitehead S."/>
            <person name="Barrell B.G."/>
            <person name="Spratt B.G."/>
            <person name="Parkhill J."/>
        </authorList>
    </citation>
    <scope>NUCLEOTIDE SEQUENCE [LARGE SCALE GENOMIC DNA]</scope>
    <source>
        <strain>MSSA476</strain>
    </source>
</reference>
<keyword id="KW-0963">Cytoplasm</keyword>
<keyword id="KW-0235">DNA replication</keyword>
<keyword id="KW-0238">DNA-binding</keyword>
<keyword id="KW-0239">DNA-directed DNA polymerase</keyword>
<keyword id="KW-0548">Nucleotidyltransferase</keyword>
<keyword id="KW-0808">Transferase</keyword>
<accession>Q6GD88</accession>